<name>UREG_PSYIN</name>
<keyword id="KW-0143">Chaperone</keyword>
<keyword id="KW-0963">Cytoplasm</keyword>
<keyword id="KW-0342">GTP-binding</keyword>
<keyword id="KW-0996">Nickel insertion</keyword>
<keyword id="KW-0547">Nucleotide-binding</keyword>
<keyword id="KW-1185">Reference proteome</keyword>
<gene>
    <name evidence="1" type="primary">ureG</name>
    <name type="ordered locus">Ping_2997</name>
</gene>
<organism>
    <name type="scientific">Psychromonas ingrahamii (strain DSM 17664 / CCUG 51855 / 37)</name>
    <dbReference type="NCBI Taxonomy" id="357804"/>
    <lineage>
        <taxon>Bacteria</taxon>
        <taxon>Pseudomonadati</taxon>
        <taxon>Pseudomonadota</taxon>
        <taxon>Gammaproteobacteria</taxon>
        <taxon>Alteromonadales</taxon>
        <taxon>Psychromonadaceae</taxon>
        <taxon>Psychromonas</taxon>
    </lineage>
</organism>
<dbReference type="EMBL" id="CP000510">
    <property type="protein sequence ID" value="ABM04699.1"/>
    <property type="molecule type" value="Genomic_DNA"/>
</dbReference>
<dbReference type="RefSeq" id="WP_011771253.1">
    <property type="nucleotide sequence ID" value="NC_008709.1"/>
</dbReference>
<dbReference type="SMR" id="A1SYY4"/>
<dbReference type="STRING" id="357804.Ping_2997"/>
<dbReference type="KEGG" id="pin:Ping_2997"/>
<dbReference type="eggNOG" id="COG0378">
    <property type="taxonomic scope" value="Bacteria"/>
</dbReference>
<dbReference type="HOGENOM" id="CLU_072144_1_0_6"/>
<dbReference type="OrthoDB" id="9802035at2"/>
<dbReference type="Proteomes" id="UP000000639">
    <property type="component" value="Chromosome"/>
</dbReference>
<dbReference type="GO" id="GO:0005737">
    <property type="term" value="C:cytoplasm"/>
    <property type="evidence" value="ECO:0007669"/>
    <property type="project" value="UniProtKB-SubCell"/>
</dbReference>
<dbReference type="GO" id="GO:0005525">
    <property type="term" value="F:GTP binding"/>
    <property type="evidence" value="ECO:0007669"/>
    <property type="project" value="UniProtKB-KW"/>
</dbReference>
<dbReference type="GO" id="GO:0003924">
    <property type="term" value="F:GTPase activity"/>
    <property type="evidence" value="ECO:0007669"/>
    <property type="project" value="InterPro"/>
</dbReference>
<dbReference type="GO" id="GO:0016151">
    <property type="term" value="F:nickel cation binding"/>
    <property type="evidence" value="ECO:0007669"/>
    <property type="project" value="UniProtKB-UniRule"/>
</dbReference>
<dbReference type="GO" id="GO:0043419">
    <property type="term" value="P:urea catabolic process"/>
    <property type="evidence" value="ECO:0007669"/>
    <property type="project" value="InterPro"/>
</dbReference>
<dbReference type="CDD" id="cd05540">
    <property type="entry name" value="UreG"/>
    <property type="match status" value="1"/>
</dbReference>
<dbReference type="FunFam" id="3.40.50.300:FF:000208">
    <property type="entry name" value="Urease accessory protein UreG"/>
    <property type="match status" value="1"/>
</dbReference>
<dbReference type="Gene3D" id="3.40.50.300">
    <property type="entry name" value="P-loop containing nucleotide triphosphate hydrolases"/>
    <property type="match status" value="1"/>
</dbReference>
<dbReference type="HAMAP" id="MF_01389">
    <property type="entry name" value="UreG"/>
    <property type="match status" value="1"/>
</dbReference>
<dbReference type="InterPro" id="IPR003495">
    <property type="entry name" value="CobW/HypB/UreG_nucleotide-bd"/>
</dbReference>
<dbReference type="InterPro" id="IPR027417">
    <property type="entry name" value="P-loop_NTPase"/>
</dbReference>
<dbReference type="InterPro" id="IPR004400">
    <property type="entry name" value="UreG"/>
</dbReference>
<dbReference type="NCBIfam" id="TIGR00101">
    <property type="entry name" value="ureG"/>
    <property type="match status" value="1"/>
</dbReference>
<dbReference type="PANTHER" id="PTHR31715">
    <property type="entry name" value="UREASE ACCESSORY PROTEIN G"/>
    <property type="match status" value="1"/>
</dbReference>
<dbReference type="PANTHER" id="PTHR31715:SF0">
    <property type="entry name" value="UREASE ACCESSORY PROTEIN G"/>
    <property type="match status" value="1"/>
</dbReference>
<dbReference type="Pfam" id="PF02492">
    <property type="entry name" value="cobW"/>
    <property type="match status" value="1"/>
</dbReference>
<dbReference type="PIRSF" id="PIRSF005624">
    <property type="entry name" value="Ni-bind_GTPase"/>
    <property type="match status" value="1"/>
</dbReference>
<dbReference type="SUPFAM" id="SSF52540">
    <property type="entry name" value="P-loop containing nucleoside triphosphate hydrolases"/>
    <property type="match status" value="1"/>
</dbReference>
<feature type="chain" id="PRO_1000145207" description="Urease accessory protein UreG">
    <location>
        <begin position="1"/>
        <end position="203"/>
    </location>
</feature>
<feature type="binding site" evidence="1">
    <location>
        <begin position="13"/>
        <end position="20"/>
    </location>
    <ligand>
        <name>GTP</name>
        <dbReference type="ChEBI" id="CHEBI:37565"/>
    </ligand>
</feature>
<comment type="function">
    <text evidence="1">Facilitates the functional incorporation of the urease nickel metallocenter. This process requires GTP hydrolysis, probably effectuated by UreG.</text>
</comment>
<comment type="subunit">
    <text evidence="1">Homodimer. UreD, UreF and UreG form a complex that acts as a GTP-hydrolysis-dependent molecular chaperone, activating the urease apoprotein by helping to assemble the nickel containing metallocenter of UreC. The UreE protein probably delivers the nickel.</text>
</comment>
<comment type="subcellular location">
    <subcellularLocation>
        <location evidence="1">Cytoplasm</location>
    </subcellularLocation>
</comment>
<comment type="similarity">
    <text evidence="1">Belongs to the SIMIBI class G3E GTPase family. UreG subfamily.</text>
</comment>
<proteinExistence type="inferred from homology"/>
<sequence length="203" mass="22128">MRKKQLLRIGVGGPVGSGKTALLSQLCLALRDKYDMAVVTNDIYTHEDAQFLTRNNALAEDRIIGVETGGCPHTAIREDASMNLAAIDDLHERHPNLDFVLVESGGDNLSATFSPELSDLTLYVIDVSAGDKIPRKGGPGITKSDLLIINKIDVADLVGASLEVMDRDTKKMRGDRPFVFSNMKTQQGLAEIIDFIETEGMLK</sequence>
<evidence type="ECO:0000255" key="1">
    <source>
        <dbReference type="HAMAP-Rule" id="MF_01389"/>
    </source>
</evidence>
<protein>
    <recommendedName>
        <fullName evidence="1">Urease accessory protein UreG</fullName>
    </recommendedName>
</protein>
<reference key="1">
    <citation type="journal article" date="2008" name="BMC Genomics">
        <title>Genomics of an extreme psychrophile, Psychromonas ingrahamii.</title>
        <authorList>
            <person name="Riley M."/>
            <person name="Staley J.T."/>
            <person name="Danchin A."/>
            <person name="Wang T.Z."/>
            <person name="Brettin T.S."/>
            <person name="Hauser L.J."/>
            <person name="Land M.L."/>
            <person name="Thompson L.S."/>
        </authorList>
    </citation>
    <scope>NUCLEOTIDE SEQUENCE [LARGE SCALE GENOMIC DNA]</scope>
    <source>
        <strain>DSM 17664 / CCUG 51855 / 37</strain>
    </source>
</reference>
<accession>A1SYY4</accession>